<name>SYC_CLOBK</name>
<comment type="catalytic activity">
    <reaction evidence="1">
        <text>tRNA(Cys) + L-cysteine + ATP = L-cysteinyl-tRNA(Cys) + AMP + diphosphate</text>
        <dbReference type="Rhea" id="RHEA:17773"/>
        <dbReference type="Rhea" id="RHEA-COMP:9661"/>
        <dbReference type="Rhea" id="RHEA-COMP:9679"/>
        <dbReference type="ChEBI" id="CHEBI:30616"/>
        <dbReference type="ChEBI" id="CHEBI:33019"/>
        <dbReference type="ChEBI" id="CHEBI:35235"/>
        <dbReference type="ChEBI" id="CHEBI:78442"/>
        <dbReference type="ChEBI" id="CHEBI:78517"/>
        <dbReference type="ChEBI" id="CHEBI:456215"/>
        <dbReference type="EC" id="6.1.1.16"/>
    </reaction>
</comment>
<comment type="cofactor">
    <cofactor evidence="1">
        <name>Zn(2+)</name>
        <dbReference type="ChEBI" id="CHEBI:29105"/>
    </cofactor>
    <text evidence="1">Binds 1 zinc ion per subunit.</text>
</comment>
<comment type="subunit">
    <text evidence="1">Monomer.</text>
</comment>
<comment type="subcellular location">
    <subcellularLocation>
        <location evidence="1">Cytoplasm</location>
    </subcellularLocation>
</comment>
<comment type="similarity">
    <text evidence="1">Belongs to the class-I aminoacyl-tRNA synthetase family.</text>
</comment>
<protein>
    <recommendedName>
        <fullName evidence="1">Cysteine--tRNA ligase</fullName>
        <ecNumber evidence="1">6.1.1.16</ecNumber>
    </recommendedName>
    <alternativeName>
        <fullName evidence="1">Cysteinyl-tRNA synthetase</fullName>
        <shortName evidence="1">CysRS</shortName>
    </alternativeName>
</protein>
<accession>B1IGH6</accession>
<gene>
    <name evidence="1" type="primary">cysS</name>
    <name type="ordered locus">CLD_1000</name>
</gene>
<organism>
    <name type="scientific">Clostridium botulinum (strain Okra / Type B1)</name>
    <dbReference type="NCBI Taxonomy" id="498213"/>
    <lineage>
        <taxon>Bacteria</taxon>
        <taxon>Bacillati</taxon>
        <taxon>Bacillota</taxon>
        <taxon>Clostridia</taxon>
        <taxon>Eubacteriales</taxon>
        <taxon>Clostridiaceae</taxon>
        <taxon>Clostridium</taxon>
    </lineage>
</organism>
<sequence length="465" mass="54314">MKVYNTLTNKKEEFLTLVPGEVKMYVCGPTVYNFFHIGNARTFVVFDTIRRYLEYRGYKVKFIQNFTDIDDKMIKRANEEGSTVKELGDRFIKEYYKDADDLNIERATKNPRATEFMEEIIKFVSDLIEKGYAYEIDGDVYFSTKKFNSYGKLSGQNLEELQLGARINVDERKKDPMDFAIWKSQKPGEPAWESPWGMGRPGWHIECSCMAYNLLGETIDIHAGGSDLSFPHHENEIAQSEARTGKQFAKYWLHSAFVNVNNQKMSKSLNNFFTAREILEKYDADVLRMFMLSGHYRTQINFSMELLDSTKAALDRLYNSINNLENLLDEVKNEELRDEELEYKNELQKYKEKYIEKMDDDFNTADAISVIFDLIRDVNTNVTIESSKELVKYTLDLIRELGNPLGILQESTKASLEEEIEKLIEERQKARKEKNWALADKIRDNLKERGIVLEDTPQGVRWKQI</sequence>
<keyword id="KW-0030">Aminoacyl-tRNA synthetase</keyword>
<keyword id="KW-0067">ATP-binding</keyword>
<keyword id="KW-0963">Cytoplasm</keyword>
<keyword id="KW-0436">Ligase</keyword>
<keyword id="KW-0479">Metal-binding</keyword>
<keyword id="KW-0547">Nucleotide-binding</keyword>
<keyword id="KW-0648">Protein biosynthesis</keyword>
<keyword id="KW-0862">Zinc</keyword>
<reference key="1">
    <citation type="journal article" date="2007" name="PLoS ONE">
        <title>Analysis of the neurotoxin complex genes in Clostridium botulinum A1-A4 and B1 strains: BoNT/A3, /Ba4 and /B1 clusters are located within plasmids.</title>
        <authorList>
            <person name="Smith T.J."/>
            <person name="Hill K.K."/>
            <person name="Foley B.T."/>
            <person name="Detter J.C."/>
            <person name="Munk A.C."/>
            <person name="Bruce D.C."/>
            <person name="Doggett N.A."/>
            <person name="Smith L.A."/>
            <person name="Marks J.D."/>
            <person name="Xie G."/>
            <person name="Brettin T.S."/>
        </authorList>
    </citation>
    <scope>NUCLEOTIDE SEQUENCE [LARGE SCALE GENOMIC DNA]</scope>
    <source>
        <strain>Okra / Type B1</strain>
    </source>
</reference>
<evidence type="ECO:0000255" key="1">
    <source>
        <dbReference type="HAMAP-Rule" id="MF_00041"/>
    </source>
</evidence>
<dbReference type="EC" id="6.1.1.16" evidence="1"/>
<dbReference type="EMBL" id="CP000939">
    <property type="protein sequence ID" value="ACA43784.1"/>
    <property type="molecule type" value="Genomic_DNA"/>
</dbReference>
<dbReference type="RefSeq" id="WP_003404297.1">
    <property type="nucleotide sequence ID" value="NC_010516.1"/>
</dbReference>
<dbReference type="SMR" id="B1IGH6"/>
<dbReference type="KEGG" id="cbb:CLD_1000"/>
<dbReference type="HOGENOM" id="CLU_013528_0_1_9"/>
<dbReference type="Proteomes" id="UP000008541">
    <property type="component" value="Chromosome"/>
</dbReference>
<dbReference type="GO" id="GO:0005829">
    <property type="term" value="C:cytosol"/>
    <property type="evidence" value="ECO:0007669"/>
    <property type="project" value="TreeGrafter"/>
</dbReference>
<dbReference type="GO" id="GO:0005524">
    <property type="term" value="F:ATP binding"/>
    <property type="evidence" value="ECO:0007669"/>
    <property type="project" value="UniProtKB-UniRule"/>
</dbReference>
<dbReference type="GO" id="GO:0004817">
    <property type="term" value="F:cysteine-tRNA ligase activity"/>
    <property type="evidence" value="ECO:0007669"/>
    <property type="project" value="UniProtKB-UniRule"/>
</dbReference>
<dbReference type="GO" id="GO:0008270">
    <property type="term" value="F:zinc ion binding"/>
    <property type="evidence" value="ECO:0007669"/>
    <property type="project" value="UniProtKB-UniRule"/>
</dbReference>
<dbReference type="GO" id="GO:0006423">
    <property type="term" value="P:cysteinyl-tRNA aminoacylation"/>
    <property type="evidence" value="ECO:0007669"/>
    <property type="project" value="UniProtKB-UniRule"/>
</dbReference>
<dbReference type="CDD" id="cd00672">
    <property type="entry name" value="CysRS_core"/>
    <property type="match status" value="1"/>
</dbReference>
<dbReference type="FunFam" id="3.40.50.620:FF:000009">
    <property type="entry name" value="Cysteine--tRNA ligase"/>
    <property type="match status" value="1"/>
</dbReference>
<dbReference type="Gene3D" id="1.20.120.1910">
    <property type="entry name" value="Cysteine-tRNA ligase, C-terminal anti-codon recognition domain"/>
    <property type="match status" value="1"/>
</dbReference>
<dbReference type="Gene3D" id="3.40.50.620">
    <property type="entry name" value="HUPs"/>
    <property type="match status" value="1"/>
</dbReference>
<dbReference type="HAMAP" id="MF_00041">
    <property type="entry name" value="Cys_tRNA_synth"/>
    <property type="match status" value="1"/>
</dbReference>
<dbReference type="InterPro" id="IPR015803">
    <property type="entry name" value="Cys-tRNA-ligase"/>
</dbReference>
<dbReference type="InterPro" id="IPR015273">
    <property type="entry name" value="Cys-tRNA-synt_Ia_DALR"/>
</dbReference>
<dbReference type="InterPro" id="IPR024909">
    <property type="entry name" value="Cys-tRNA/MSH_ligase"/>
</dbReference>
<dbReference type="InterPro" id="IPR056411">
    <property type="entry name" value="CysS_C"/>
</dbReference>
<dbReference type="InterPro" id="IPR014729">
    <property type="entry name" value="Rossmann-like_a/b/a_fold"/>
</dbReference>
<dbReference type="InterPro" id="IPR032678">
    <property type="entry name" value="tRNA-synt_1_cat_dom"/>
</dbReference>
<dbReference type="InterPro" id="IPR009080">
    <property type="entry name" value="tRNAsynth_Ia_anticodon-bd"/>
</dbReference>
<dbReference type="NCBIfam" id="TIGR00435">
    <property type="entry name" value="cysS"/>
    <property type="match status" value="1"/>
</dbReference>
<dbReference type="PANTHER" id="PTHR10890:SF3">
    <property type="entry name" value="CYSTEINE--TRNA LIGASE, CYTOPLASMIC"/>
    <property type="match status" value="1"/>
</dbReference>
<dbReference type="PANTHER" id="PTHR10890">
    <property type="entry name" value="CYSTEINYL-TRNA SYNTHETASE"/>
    <property type="match status" value="1"/>
</dbReference>
<dbReference type="Pfam" id="PF23493">
    <property type="entry name" value="CysS_C"/>
    <property type="match status" value="1"/>
</dbReference>
<dbReference type="Pfam" id="PF09190">
    <property type="entry name" value="DALR_2"/>
    <property type="match status" value="1"/>
</dbReference>
<dbReference type="Pfam" id="PF01406">
    <property type="entry name" value="tRNA-synt_1e"/>
    <property type="match status" value="1"/>
</dbReference>
<dbReference type="PRINTS" id="PR00983">
    <property type="entry name" value="TRNASYNTHCYS"/>
</dbReference>
<dbReference type="SMART" id="SM00840">
    <property type="entry name" value="DALR_2"/>
    <property type="match status" value="1"/>
</dbReference>
<dbReference type="SUPFAM" id="SSF47323">
    <property type="entry name" value="Anticodon-binding domain of a subclass of class I aminoacyl-tRNA synthetases"/>
    <property type="match status" value="1"/>
</dbReference>
<dbReference type="SUPFAM" id="SSF52374">
    <property type="entry name" value="Nucleotidylyl transferase"/>
    <property type="match status" value="1"/>
</dbReference>
<proteinExistence type="inferred from homology"/>
<feature type="chain" id="PRO_1000090827" description="Cysteine--tRNA ligase">
    <location>
        <begin position="1"/>
        <end position="465"/>
    </location>
</feature>
<feature type="short sequence motif" description="'HIGH' region">
    <location>
        <begin position="29"/>
        <end position="39"/>
    </location>
</feature>
<feature type="short sequence motif" description="'KMSKS' region">
    <location>
        <begin position="264"/>
        <end position="268"/>
    </location>
</feature>
<feature type="binding site" evidence="1">
    <location>
        <position position="27"/>
    </location>
    <ligand>
        <name>Zn(2+)</name>
        <dbReference type="ChEBI" id="CHEBI:29105"/>
    </ligand>
</feature>
<feature type="binding site" evidence="1">
    <location>
        <position position="207"/>
    </location>
    <ligand>
        <name>Zn(2+)</name>
        <dbReference type="ChEBI" id="CHEBI:29105"/>
    </ligand>
</feature>
<feature type="binding site" evidence="1">
    <location>
        <position position="232"/>
    </location>
    <ligand>
        <name>Zn(2+)</name>
        <dbReference type="ChEBI" id="CHEBI:29105"/>
    </ligand>
</feature>
<feature type="binding site" evidence="1">
    <location>
        <position position="236"/>
    </location>
    <ligand>
        <name>Zn(2+)</name>
        <dbReference type="ChEBI" id="CHEBI:29105"/>
    </ligand>
</feature>
<feature type="binding site" evidence="1">
    <location>
        <position position="267"/>
    </location>
    <ligand>
        <name>ATP</name>
        <dbReference type="ChEBI" id="CHEBI:30616"/>
    </ligand>
</feature>